<proteinExistence type="inferred from homology"/>
<reference key="1">
    <citation type="submission" date="2008-01" db="EMBL/GenBank/DDBJ databases">
        <title>Complete sequence of Pseudomonas putida GB-1.</title>
        <authorList>
            <consortium name="US DOE Joint Genome Institute"/>
            <person name="Copeland A."/>
            <person name="Lucas S."/>
            <person name="Lapidus A."/>
            <person name="Barry K."/>
            <person name="Glavina del Rio T."/>
            <person name="Dalin E."/>
            <person name="Tice H."/>
            <person name="Pitluck S."/>
            <person name="Bruce D."/>
            <person name="Goodwin L."/>
            <person name="Chertkov O."/>
            <person name="Brettin T."/>
            <person name="Detter J.C."/>
            <person name="Han C."/>
            <person name="Kuske C.R."/>
            <person name="Schmutz J."/>
            <person name="Larimer F."/>
            <person name="Land M."/>
            <person name="Hauser L."/>
            <person name="Kyrpides N."/>
            <person name="Kim E."/>
            <person name="McCarthy J.K."/>
            <person name="Richardson P."/>
        </authorList>
    </citation>
    <scope>NUCLEOTIDE SEQUENCE [LARGE SCALE GENOMIC DNA]</scope>
    <source>
        <strain>GB-1</strain>
    </source>
</reference>
<accession>B0KT32</accession>
<organism>
    <name type="scientific">Pseudomonas putida (strain GB-1)</name>
    <dbReference type="NCBI Taxonomy" id="76869"/>
    <lineage>
        <taxon>Bacteria</taxon>
        <taxon>Pseudomonadati</taxon>
        <taxon>Pseudomonadota</taxon>
        <taxon>Gammaproteobacteria</taxon>
        <taxon>Pseudomonadales</taxon>
        <taxon>Pseudomonadaceae</taxon>
        <taxon>Pseudomonas</taxon>
    </lineage>
</organism>
<keyword id="KW-0004">4Fe-4S</keyword>
<keyword id="KW-0067">ATP-binding</keyword>
<keyword id="KW-0963">Cytoplasm</keyword>
<keyword id="KW-0408">Iron</keyword>
<keyword id="KW-0411">Iron-sulfur</keyword>
<keyword id="KW-0460">Magnesium</keyword>
<keyword id="KW-0479">Metal-binding</keyword>
<keyword id="KW-0547">Nucleotide-binding</keyword>
<keyword id="KW-0694">RNA-binding</keyword>
<keyword id="KW-0808">Transferase</keyword>
<keyword id="KW-0819">tRNA processing</keyword>
<keyword id="KW-0820">tRNA-binding</keyword>
<feature type="chain" id="PRO_0000348799" description="tRNA-cytidine(32) 2-sulfurtransferase">
    <location>
        <begin position="1"/>
        <end position="274"/>
    </location>
</feature>
<feature type="short sequence motif" description="PP-loop motif" evidence="1">
    <location>
        <begin position="40"/>
        <end position="45"/>
    </location>
</feature>
<feature type="binding site" evidence="1">
    <location>
        <position position="115"/>
    </location>
    <ligand>
        <name>[4Fe-4S] cluster</name>
        <dbReference type="ChEBI" id="CHEBI:49883"/>
    </ligand>
</feature>
<feature type="binding site" evidence="1">
    <location>
        <position position="118"/>
    </location>
    <ligand>
        <name>[4Fe-4S] cluster</name>
        <dbReference type="ChEBI" id="CHEBI:49883"/>
    </ligand>
</feature>
<feature type="binding site" evidence="1">
    <location>
        <position position="206"/>
    </location>
    <ligand>
        <name>[4Fe-4S] cluster</name>
        <dbReference type="ChEBI" id="CHEBI:49883"/>
    </ligand>
</feature>
<evidence type="ECO:0000255" key="1">
    <source>
        <dbReference type="HAMAP-Rule" id="MF_01850"/>
    </source>
</evidence>
<name>TTCA_PSEPG</name>
<gene>
    <name evidence="1" type="primary">ttcA</name>
    <name type="ordered locus">PputGB1_1243</name>
</gene>
<protein>
    <recommendedName>
        <fullName evidence="1">tRNA-cytidine(32) 2-sulfurtransferase</fullName>
        <ecNumber evidence="1">2.8.1.-</ecNumber>
    </recommendedName>
    <alternativeName>
        <fullName evidence="1">Two-thiocytidine biosynthesis protein A</fullName>
    </alternativeName>
    <alternativeName>
        <fullName evidence="1">tRNA 2-thiocytidine biosynthesis protein TtcA</fullName>
    </alternativeName>
</protein>
<comment type="function">
    <text evidence="1">Catalyzes the ATP-dependent 2-thiolation of cytidine in position 32 of tRNA, to form 2-thiocytidine (s(2)C32). The sulfur atoms are provided by the cysteine/cysteine desulfurase (IscS) system.</text>
</comment>
<comment type="catalytic activity">
    <reaction evidence="1">
        <text>cytidine(32) in tRNA + S-sulfanyl-L-cysteinyl-[cysteine desulfurase] + AH2 + ATP = 2-thiocytidine(32) in tRNA + L-cysteinyl-[cysteine desulfurase] + A + AMP + diphosphate + H(+)</text>
        <dbReference type="Rhea" id="RHEA:57048"/>
        <dbReference type="Rhea" id="RHEA-COMP:10288"/>
        <dbReference type="Rhea" id="RHEA-COMP:12157"/>
        <dbReference type="Rhea" id="RHEA-COMP:12158"/>
        <dbReference type="Rhea" id="RHEA-COMP:14821"/>
        <dbReference type="ChEBI" id="CHEBI:13193"/>
        <dbReference type="ChEBI" id="CHEBI:15378"/>
        <dbReference type="ChEBI" id="CHEBI:17499"/>
        <dbReference type="ChEBI" id="CHEBI:29950"/>
        <dbReference type="ChEBI" id="CHEBI:30616"/>
        <dbReference type="ChEBI" id="CHEBI:33019"/>
        <dbReference type="ChEBI" id="CHEBI:61963"/>
        <dbReference type="ChEBI" id="CHEBI:82748"/>
        <dbReference type="ChEBI" id="CHEBI:141453"/>
        <dbReference type="ChEBI" id="CHEBI:456215"/>
    </reaction>
    <physiologicalReaction direction="left-to-right" evidence="1">
        <dbReference type="Rhea" id="RHEA:57049"/>
    </physiologicalReaction>
</comment>
<comment type="cofactor">
    <cofactor evidence="1">
        <name>Mg(2+)</name>
        <dbReference type="ChEBI" id="CHEBI:18420"/>
    </cofactor>
</comment>
<comment type="cofactor">
    <cofactor evidence="1">
        <name>[4Fe-4S] cluster</name>
        <dbReference type="ChEBI" id="CHEBI:49883"/>
    </cofactor>
    <text evidence="1">Binds 1 [4Fe-4S] cluster per subunit. The cluster is chelated by three Cys residues, the fourth Fe has a free coordination site that may bind a sulfur atom transferred from the persulfide of IscS.</text>
</comment>
<comment type="pathway">
    <text evidence="1">tRNA modification.</text>
</comment>
<comment type="subunit">
    <text evidence="1">Homodimer.</text>
</comment>
<comment type="subcellular location">
    <subcellularLocation>
        <location evidence="1">Cytoplasm</location>
    </subcellularLocation>
</comment>
<comment type="miscellaneous">
    <text evidence="1">The thiolation reaction likely consists of two steps: a first activation step by ATP to form an adenylated intermediate of the target base of tRNA, and a second nucleophilic substitution step of the sulfur (S) atom supplied by the hydrosulfide attached to the Fe-S cluster.</text>
</comment>
<comment type="similarity">
    <text evidence="1">Belongs to the TtcA family.</text>
</comment>
<dbReference type="EC" id="2.8.1.-" evidence="1"/>
<dbReference type="EMBL" id="CP000926">
    <property type="protein sequence ID" value="ABY97150.1"/>
    <property type="molecule type" value="Genomic_DNA"/>
</dbReference>
<dbReference type="RefSeq" id="WP_012270926.1">
    <property type="nucleotide sequence ID" value="NC_010322.1"/>
</dbReference>
<dbReference type="SMR" id="B0KT32"/>
<dbReference type="GeneID" id="97166704"/>
<dbReference type="KEGG" id="ppg:PputGB1_1243"/>
<dbReference type="eggNOG" id="COG0037">
    <property type="taxonomic scope" value="Bacteria"/>
</dbReference>
<dbReference type="HOGENOM" id="CLU_026481_0_0_6"/>
<dbReference type="Proteomes" id="UP000002157">
    <property type="component" value="Chromosome"/>
</dbReference>
<dbReference type="GO" id="GO:0005737">
    <property type="term" value="C:cytoplasm"/>
    <property type="evidence" value="ECO:0007669"/>
    <property type="project" value="UniProtKB-SubCell"/>
</dbReference>
<dbReference type="GO" id="GO:0051539">
    <property type="term" value="F:4 iron, 4 sulfur cluster binding"/>
    <property type="evidence" value="ECO:0007669"/>
    <property type="project" value="UniProtKB-UniRule"/>
</dbReference>
<dbReference type="GO" id="GO:0005524">
    <property type="term" value="F:ATP binding"/>
    <property type="evidence" value="ECO:0007669"/>
    <property type="project" value="UniProtKB-UniRule"/>
</dbReference>
<dbReference type="GO" id="GO:0000287">
    <property type="term" value="F:magnesium ion binding"/>
    <property type="evidence" value="ECO:0007669"/>
    <property type="project" value="UniProtKB-UniRule"/>
</dbReference>
<dbReference type="GO" id="GO:0016783">
    <property type="term" value="F:sulfurtransferase activity"/>
    <property type="evidence" value="ECO:0007669"/>
    <property type="project" value="UniProtKB-UniRule"/>
</dbReference>
<dbReference type="GO" id="GO:0000049">
    <property type="term" value="F:tRNA binding"/>
    <property type="evidence" value="ECO:0007669"/>
    <property type="project" value="UniProtKB-KW"/>
</dbReference>
<dbReference type="GO" id="GO:0034227">
    <property type="term" value="P:tRNA thio-modification"/>
    <property type="evidence" value="ECO:0007669"/>
    <property type="project" value="UniProtKB-UniRule"/>
</dbReference>
<dbReference type="CDD" id="cd24138">
    <property type="entry name" value="TtcA-like"/>
    <property type="match status" value="1"/>
</dbReference>
<dbReference type="Gene3D" id="3.40.50.620">
    <property type="entry name" value="HUPs"/>
    <property type="match status" value="1"/>
</dbReference>
<dbReference type="HAMAP" id="MF_01850">
    <property type="entry name" value="TtcA"/>
    <property type="match status" value="1"/>
</dbReference>
<dbReference type="InterPro" id="IPR014729">
    <property type="entry name" value="Rossmann-like_a/b/a_fold"/>
</dbReference>
<dbReference type="InterPro" id="IPR011063">
    <property type="entry name" value="TilS/TtcA_N"/>
</dbReference>
<dbReference type="InterPro" id="IPR012089">
    <property type="entry name" value="tRNA_Cyd_32_2_STrfase"/>
</dbReference>
<dbReference type="InterPro" id="IPR035107">
    <property type="entry name" value="tRNA_thiolation_TtcA_Ctu1"/>
</dbReference>
<dbReference type="NCBIfam" id="NF007972">
    <property type="entry name" value="PRK10696.1"/>
    <property type="match status" value="1"/>
</dbReference>
<dbReference type="PANTHER" id="PTHR43686:SF1">
    <property type="entry name" value="AMINOTRAN_5 DOMAIN-CONTAINING PROTEIN"/>
    <property type="match status" value="1"/>
</dbReference>
<dbReference type="PANTHER" id="PTHR43686">
    <property type="entry name" value="SULFURTRANSFERASE-RELATED"/>
    <property type="match status" value="1"/>
</dbReference>
<dbReference type="Pfam" id="PF01171">
    <property type="entry name" value="ATP_bind_3"/>
    <property type="match status" value="1"/>
</dbReference>
<dbReference type="PIRSF" id="PIRSF004976">
    <property type="entry name" value="ATPase_YdaO"/>
    <property type="match status" value="1"/>
</dbReference>
<dbReference type="SUPFAM" id="SSF52402">
    <property type="entry name" value="Adenine nucleotide alpha hydrolases-like"/>
    <property type="match status" value="1"/>
</dbReference>
<sequence>MGTLSVNQNKLQKRLRRLAGEAITDYNMIEDGDKVMVCLSGGKDSYTMLDVLLHLQKVAPIKFEIVAVNMDQKQPGFPEHVLPAYLKELGVEYHIVEKDTYSVVKELVPEGKTTCSLCSRLRRGTLYTFADEIGATKMALGHHRDDIVETFFLNMFFNGALKGMPPKLRADDGRNVVIRPLAYCSEKDIQAYSDMKEFPIIPCNLCGSQENLQRQVVKDMLVEWERKHPGRTESIFRALQNVAPSQLADRNLFDFTSLKIDENATPRFLDVLNI</sequence>